<proteinExistence type="inferred from homology"/>
<sequence>MNLTRREFAKANAAAIAAAAAGLPILVRASNLVTEADVTSLVWNKAPCRFCGTGCSVMVATRDGQVVATHGDIKAEVNRGINCVKGYFLSKIMYGSDRLTRPLLRMKDGKFDKQGEFQPISWEQAFDIMAEKFKAALKAKGPESVGMFGSGQWTVWEGYAANKLFKAGLRSNNIDPNARHCMASAVMGFMRSFGMDEPMGCYDDIEATDSFVLWGSNMAEMHPVLWSRVTDRRLSAPQVKVAVLSTFEHRSFELADLPMVFKPQTDLIILNYIANHIIESGAVNRDFVERHVRFAHGAEDIGYGLRPDDPLEKKAKNADKANTWSDIDFKAFAEFVKPYTLERTARESGVPAERLKALAELYADPKRKVVSFWTMGFNQHTRGVWANNLIYNIHLLTGKISEPGNSPFSLTGQPSACGTAREVGTFSHRLPADLVVTNPKHRETAEKIWKVPAGTIQEKVGFHAVQQSRMLNDGVLNVYWTQVSNNMQAGPNVMQEVLPGWRNPDNFVIVSDVYPTVSAQAADLILPSAMWVEKEGAFGNAERRTQFWHQLVKAPGEAKSDLWQLVEFSKRFTTDEVWPAELLAKAPELKGKTLYDVLFRNGQVDRFPASDLAKGYANDEVDAFGFYIQKGLFEEYAAFGRGHGHDLAPFDAYHEARGLRWPVVDGKETRWRYREGYDPYVSKGSGVQFYGYPDKKAIVFALPYEPPAEAPDQDYPFWLATGRVLEHWHTGSMTARVPELYKAVPDALVYMHPEDARQLKLRRGSEVKVVSRRGEIRARVETRGRNKPPQGLVFVPFFDANKLINKVTLDATDPISKQTDYKKCAVRIELLNLA</sequence>
<feature type="signal peptide" description="Tat-type signal" evidence="1">
    <location>
        <begin position="1"/>
        <end position="29"/>
    </location>
</feature>
<feature type="chain" id="PRO_1000069723" description="Periplasmic nitrate reductase" evidence="1">
    <location>
        <begin position="30"/>
        <end position="834"/>
    </location>
</feature>
<feature type="domain" description="4Fe-4S Mo/W bis-MGD-type" evidence="1">
    <location>
        <begin position="41"/>
        <end position="97"/>
    </location>
</feature>
<feature type="binding site" evidence="1">
    <location>
        <position position="48"/>
    </location>
    <ligand>
        <name>[4Fe-4S] cluster</name>
        <dbReference type="ChEBI" id="CHEBI:49883"/>
    </ligand>
</feature>
<feature type="binding site" evidence="1">
    <location>
        <position position="51"/>
    </location>
    <ligand>
        <name>[4Fe-4S] cluster</name>
        <dbReference type="ChEBI" id="CHEBI:49883"/>
    </ligand>
</feature>
<feature type="binding site" evidence="1">
    <location>
        <position position="55"/>
    </location>
    <ligand>
        <name>[4Fe-4S] cluster</name>
        <dbReference type="ChEBI" id="CHEBI:49883"/>
    </ligand>
</feature>
<feature type="binding site" evidence="1">
    <location>
        <position position="83"/>
    </location>
    <ligand>
        <name>[4Fe-4S] cluster</name>
        <dbReference type="ChEBI" id="CHEBI:49883"/>
    </ligand>
</feature>
<feature type="binding site" evidence="1">
    <location>
        <position position="85"/>
    </location>
    <ligand>
        <name>Mo-bis(molybdopterin guanine dinucleotide)</name>
        <dbReference type="ChEBI" id="CHEBI:60539"/>
    </ligand>
</feature>
<feature type="binding site" evidence="1">
    <location>
        <position position="152"/>
    </location>
    <ligand>
        <name>Mo-bis(molybdopterin guanine dinucleotide)</name>
        <dbReference type="ChEBI" id="CHEBI:60539"/>
    </ligand>
</feature>
<feature type="binding site" evidence="1">
    <location>
        <position position="177"/>
    </location>
    <ligand>
        <name>Mo-bis(molybdopterin guanine dinucleotide)</name>
        <dbReference type="ChEBI" id="CHEBI:60539"/>
    </ligand>
</feature>
<feature type="binding site" evidence="1">
    <location>
        <position position="181"/>
    </location>
    <ligand>
        <name>Mo-bis(molybdopterin guanine dinucleotide)</name>
        <dbReference type="ChEBI" id="CHEBI:60539"/>
    </ligand>
</feature>
<feature type="binding site" evidence="1">
    <location>
        <begin position="214"/>
        <end position="221"/>
    </location>
    <ligand>
        <name>Mo-bis(molybdopterin guanine dinucleotide)</name>
        <dbReference type="ChEBI" id="CHEBI:60539"/>
    </ligand>
</feature>
<feature type="binding site" evidence="1">
    <location>
        <begin position="245"/>
        <end position="249"/>
    </location>
    <ligand>
        <name>Mo-bis(molybdopterin guanine dinucleotide)</name>
        <dbReference type="ChEBI" id="CHEBI:60539"/>
    </ligand>
</feature>
<feature type="binding site" evidence="1">
    <location>
        <begin position="264"/>
        <end position="266"/>
    </location>
    <ligand>
        <name>Mo-bis(molybdopterin guanine dinucleotide)</name>
        <dbReference type="ChEBI" id="CHEBI:60539"/>
    </ligand>
</feature>
<feature type="binding site" evidence="1">
    <location>
        <position position="375"/>
    </location>
    <ligand>
        <name>Mo-bis(molybdopterin guanine dinucleotide)</name>
        <dbReference type="ChEBI" id="CHEBI:60539"/>
    </ligand>
</feature>
<feature type="binding site" evidence="1">
    <location>
        <position position="379"/>
    </location>
    <ligand>
        <name>Mo-bis(molybdopterin guanine dinucleotide)</name>
        <dbReference type="ChEBI" id="CHEBI:60539"/>
    </ligand>
</feature>
<feature type="binding site" evidence="1">
    <location>
        <position position="485"/>
    </location>
    <ligand>
        <name>Mo-bis(molybdopterin guanine dinucleotide)</name>
        <dbReference type="ChEBI" id="CHEBI:60539"/>
    </ligand>
</feature>
<feature type="binding site" evidence="1">
    <location>
        <begin position="511"/>
        <end position="512"/>
    </location>
    <ligand>
        <name>Mo-bis(molybdopterin guanine dinucleotide)</name>
        <dbReference type="ChEBI" id="CHEBI:60539"/>
    </ligand>
</feature>
<feature type="binding site" evidence="1">
    <location>
        <position position="534"/>
    </location>
    <ligand>
        <name>Mo-bis(molybdopterin guanine dinucleotide)</name>
        <dbReference type="ChEBI" id="CHEBI:60539"/>
    </ligand>
</feature>
<feature type="binding site" evidence="1">
    <location>
        <position position="561"/>
    </location>
    <ligand>
        <name>Mo-bis(molybdopterin guanine dinucleotide)</name>
        <dbReference type="ChEBI" id="CHEBI:60539"/>
    </ligand>
</feature>
<feature type="binding site" evidence="1">
    <location>
        <begin position="721"/>
        <end position="730"/>
    </location>
    <ligand>
        <name>Mo-bis(molybdopterin guanine dinucleotide)</name>
        <dbReference type="ChEBI" id="CHEBI:60539"/>
    </ligand>
</feature>
<feature type="binding site" evidence="1">
    <location>
        <position position="797"/>
    </location>
    <ligand>
        <name>substrate</name>
    </ligand>
</feature>
<feature type="binding site" evidence="1">
    <location>
        <position position="805"/>
    </location>
    <ligand>
        <name>Mo-bis(molybdopterin guanine dinucleotide)</name>
        <dbReference type="ChEBI" id="CHEBI:60539"/>
    </ligand>
</feature>
<feature type="binding site" evidence="1">
    <location>
        <position position="822"/>
    </location>
    <ligand>
        <name>Mo-bis(molybdopterin guanine dinucleotide)</name>
        <dbReference type="ChEBI" id="CHEBI:60539"/>
    </ligand>
</feature>
<gene>
    <name evidence="1" type="primary">napA</name>
    <name type="ordered locus">PA14_49250</name>
</gene>
<dbReference type="EC" id="1.9.6.1" evidence="1"/>
<dbReference type="EMBL" id="CP000438">
    <property type="protein sequence ID" value="ABJ10342.1"/>
    <property type="molecule type" value="Genomic_DNA"/>
</dbReference>
<dbReference type="RefSeq" id="WP_011666721.1">
    <property type="nucleotide sequence ID" value="NZ_CP034244.1"/>
</dbReference>
<dbReference type="SMR" id="Q02IZ4"/>
<dbReference type="KEGG" id="pau:PA14_49250"/>
<dbReference type="PseudoCAP" id="PA14_49250"/>
<dbReference type="HOGENOM" id="CLU_000422_13_4_6"/>
<dbReference type="Proteomes" id="UP000000653">
    <property type="component" value="Chromosome"/>
</dbReference>
<dbReference type="GO" id="GO:0016020">
    <property type="term" value="C:membrane"/>
    <property type="evidence" value="ECO:0007669"/>
    <property type="project" value="TreeGrafter"/>
</dbReference>
<dbReference type="GO" id="GO:0009325">
    <property type="term" value="C:nitrate reductase complex"/>
    <property type="evidence" value="ECO:0007669"/>
    <property type="project" value="TreeGrafter"/>
</dbReference>
<dbReference type="GO" id="GO:0042597">
    <property type="term" value="C:periplasmic space"/>
    <property type="evidence" value="ECO:0007669"/>
    <property type="project" value="UniProtKB-SubCell"/>
</dbReference>
<dbReference type="GO" id="GO:0051539">
    <property type="term" value="F:4 iron, 4 sulfur cluster binding"/>
    <property type="evidence" value="ECO:0007669"/>
    <property type="project" value="UniProtKB-KW"/>
</dbReference>
<dbReference type="GO" id="GO:0009055">
    <property type="term" value="F:electron transfer activity"/>
    <property type="evidence" value="ECO:0007669"/>
    <property type="project" value="UniProtKB-UniRule"/>
</dbReference>
<dbReference type="GO" id="GO:0005506">
    <property type="term" value="F:iron ion binding"/>
    <property type="evidence" value="ECO:0007669"/>
    <property type="project" value="UniProtKB-UniRule"/>
</dbReference>
<dbReference type="GO" id="GO:0030151">
    <property type="term" value="F:molybdenum ion binding"/>
    <property type="evidence" value="ECO:0007669"/>
    <property type="project" value="InterPro"/>
</dbReference>
<dbReference type="GO" id="GO:0043546">
    <property type="term" value="F:molybdopterin cofactor binding"/>
    <property type="evidence" value="ECO:0007669"/>
    <property type="project" value="InterPro"/>
</dbReference>
<dbReference type="GO" id="GO:0050140">
    <property type="term" value="F:nitrate reductase (cytochrome) activity"/>
    <property type="evidence" value="ECO:0007669"/>
    <property type="project" value="UniProtKB-EC"/>
</dbReference>
<dbReference type="GO" id="GO:0045333">
    <property type="term" value="P:cellular respiration"/>
    <property type="evidence" value="ECO:0007669"/>
    <property type="project" value="UniProtKB-ARBA"/>
</dbReference>
<dbReference type="GO" id="GO:0006777">
    <property type="term" value="P:Mo-molybdopterin cofactor biosynthetic process"/>
    <property type="evidence" value="ECO:0007669"/>
    <property type="project" value="UniProtKB-UniRule"/>
</dbReference>
<dbReference type="GO" id="GO:0042128">
    <property type="term" value="P:nitrate assimilation"/>
    <property type="evidence" value="ECO:0007669"/>
    <property type="project" value="UniProtKB-UniRule"/>
</dbReference>
<dbReference type="CDD" id="cd02791">
    <property type="entry name" value="MopB_CT_Nitrate-R-NapA-like"/>
    <property type="match status" value="1"/>
</dbReference>
<dbReference type="CDD" id="cd02754">
    <property type="entry name" value="MopB_Nitrate-R-NapA-like"/>
    <property type="match status" value="1"/>
</dbReference>
<dbReference type="FunFam" id="2.40.40.20:FF:000005">
    <property type="entry name" value="Periplasmic nitrate reductase"/>
    <property type="match status" value="1"/>
</dbReference>
<dbReference type="Gene3D" id="2.40.40.20">
    <property type="match status" value="1"/>
</dbReference>
<dbReference type="Gene3D" id="3.30.200.210">
    <property type="match status" value="1"/>
</dbReference>
<dbReference type="Gene3D" id="3.40.50.740">
    <property type="match status" value="1"/>
</dbReference>
<dbReference type="Gene3D" id="3.40.228.10">
    <property type="entry name" value="Dimethylsulfoxide Reductase, domain 2"/>
    <property type="match status" value="1"/>
</dbReference>
<dbReference type="HAMAP" id="MF_01630">
    <property type="entry name" value="Nitrate_reduct_NapA"/>
    <property type="match status" value="1"/>
</dbReference>
<dbReference type="InterPro" id="IPR009010">
    <property type="entry name" value="Asp_de-COase-like_dom_sf"/>
</dbReference>
<dbReference type="InterPro" id="IPR041957">
    <property type="entry name" value="CT_Nitrate-R-NapA-like"/>
</dbReference>
<dbReference type="InterPro" id="IPR006657">
    <property type="entry name" value="MoPterin_dinucl-bd_dom"/>
</dbReference>
<dbReference type="InterPro" id="IPR006656">
    <property type="entry name" value="Mopterin_OxRdtase"/>
</dbReference>
<dbReference type="InterPro" id="IPR006963">
    <property type="entry name" value="Mopterin_OxRdtase_4Fe-4S_dom"/>
</dbReference>
<dbReference type="InterPro" id="IPR027467">
    <property type="entry name" value="MopterinOxRdtase_cofactor_BS"/>
</dbReference>
<dbReference type="InterPro" id="IPR010051">
    <property type="entry name" value="Periplasm_NO3_reductase_lsu"/>
</dbReference>
<dbReference type="InterPro" id="IPR050123">
    <property type="entry name" value="Prok_molybdopt-oxidoreductase"/>
</dbReference>
<dbReference type="InterPro" id="IPR006311">
    <property type="entry name" value="TAT_signal"/>
</dbReference>
<dbReference type="NCBIfam" id="TIGR01706">
    <property type="entry name" value="NAPA"/>
    <property type="match status" value="1"/>
</dbReference>
<dbReference type="NCBIfam" id="NF010055">
    <property type="entry name" value="PRK13532.1"/>
    <property type="match status" value="1"/>
</dbReference>
<dbReference type="PANTHER" id="PTHR43105:SF11">
    <property type="entry name" value="PERIPLASMIC NITRATE REDUCTASE"/>
    <property type="match status" value="1"/>
</dbReference>
<dbReference type="PANTHER" id="PTHR43105">
    <property type="entry name" value="RESPIRATORY NITRATE REDUCTASE"/>
    <property type="match status" value="1"/>
</dbReference>
<dbReference type="Pfam" id="PF04879">
    <property type="entry name" value="Molybdop_Fe4S4"/>
    <property type="match status" value="1"/>
</dbReference>
<dbReference type="Pfam" id="PF00384">
    <property type="entry name" value="Molybdopterin"/>
    <property type="match status" value="1"/>
</dbReference>
<dbReference type="Pfam" id="PF01568">
    <property type="entry name" value="Molydop_binding"/>
    <property type="match status" value="1"/>
</dbReference>
<dbReference type="SMART" id="SM00926">
    <property type="entry name" value="Molybdop_Fe4S4"/>
    <property type="match status" value="1"/>
</dbReference>
<dbReference type="SUPFAM" id="SSF50692">
    <property type="entry name" value="ADC-like"/>
    <property type="match status" value="1"/>
</dbReference>
<dbReference type="SUPFAM" id="SSF53706">
    <property type="entry name" value="Formate dehydrogenase/DMSO reductase, domains 1-3"/>
    <property type="match status" value="1"/>
</dbReference>
<dbReference type="PROSITE" id="PS51669">
    <property type="entry name" value="4FE4S_MOW_BIS_MGD"/>
    <property type="match status" value="1"/>
</dbReference>
<dbReference type="PROSITE" id="PS00551">
    <property type="entry name" value="MOLYBDOPTERIN_PROK_1"/>
    <property type="match status" value="1"/>
</dbReference>
<dbReference type="PROSITE" id="PS51318">
    <property type="entry name" value="TAT"/>
    <property type="match status" value="1"/>
</dbReference>
<accession>Q02IZ4</accession>
<evidence type="ECO:0000255" key="1">
    <source>
        <dbReference type="HAMAP-Rule" id="MF_01630"/>
    </source>
</evidence>
<reference key="1">
    <citation type="journal article" date="2006" name="Genome Biol.">
        <title>Genomic analysis reveals that Pseudomonas aeruginosa virulence is combinatorial.</title>
        <authorList>
            <person name="Lee D.G."/>
            <person name="Urbach J.M."/>
            <person name="Wu G."/>
            <person name="Liberati N.T."/>
            <person name="Feinbaum R.L."/>
            <person name="Miyata S."/>
            <person name="Diggins L.T."/>
            <person name="He J."/>
            <person name="Saucier M."/>
            <person name="Deziel E."/>
            <person name="Friedman L."/>
            <person name="Li L."/>
            <person name="Grills G."/>
            <person name="Montgomery K."/>
            <person name="Kucherlapati R."/>
            <person name="Rahme L.G."/>
            <person name="Ausubel F.M."/>
        </authorList>
    </citation>
    <scope>NUCLEOTIDE SEQUENCE [LARGE SCALE GENOMIC DNA]</scope>
    <source>
        <strain>UCBPP-PA14</strain>
    </source>
</reference>
<comment type="function">
    <text evidence="1">Catalytic subunit of the periplasmic nitrate reductase complex NapAB. Receives electrons from NapB and catalyzes the reduction of nitrate to nitrite.</text>
</comment>
<comment type="catalytic activity">
    <reaction evidence="1">
        <text>2 Fe(II)-[cytochrome] + nitrate + 2 H(+) = 2 Fe(III)-[cytochrome] + nitrite + H2O</text>
        <dbReference type="Rhea" id="RHEA:12909"/>
        <dbReference type="Rhea" id="RHEA-COMP:11777"/>
        <dbReference type="Rhea" id="RHEA-COMP:11778"/>
        <dbReference type="ChEBI" id="CHEBI:15377"/>
        <dbReference type="ChEBI" id="CHEBI:15378"/>
        <dbReference type="ChEBI" id="CHEBI:16301"/>
        <dbReference type="ChEBI" id="CHEBI:17632"/>
        <dbReference type="ChEBI" id="CHEBI:29033"/>
        <dbReference type="ChEBI" id="CHEBI:29034"/>
        <dbReference type="EC" id="1.9.6.1"/>
    </reaction>
</comment>
<comment type="cofactor">
    <cofactor evidence="1">
        <name>[4Fe-4S] cluster</name>
        <dbReference type="ChEBI" id="CHEBI:49883"/>
    </cofactor>
    <text evidence="1">Binds 1 [4Fe-4S] cluster.</text>
</comment>
<comment type="cofactor">
    <cofactor evidence="1">
        <name>Mo-bis(molybdopterin guanine dinucleotide)</name>
        <dbReference type="ChEBI" id="CHEBI:60539"/>
    </cofactor>
    <text evidence="1">Binds 1 molybdenum-bis(molybdopterin guanine dinucleotide) (Mo-bis-MGD) cofactor per subunit.</text>
</comment>
<comment type="subunit">
    <text evidence="1">Component of the periplasmic nitrate reductase NapAB complex composed of NapA and NapB.</text>
</comment>
<comment type="subcellular location">
    <subcellularLocation>
        <location evidence="1">Periplasm</location>
    </subcellularLocation>
</comment>
<comment type="PTM">
    <text evidence="1">Predicted to be exported by the Tat system. The position of the signal peptide cleavage has not been experimentally proven.</text>
</comment>
<comment type="similarity">
    <text evidence="1">Belongs to the prokaryotic molybdopterin-containing oxidoreductase family. NasA/NapA/NarB subfamily.</text>
</comment>
<name>NAPA_PSEAB</name>
<keyword id="KW-0004">4Fe-4S</keyword>
<keyword id="KW-0249">Electron transport</keyword>
<keyword id="KW-0408">Iron</keyword>
<keyword id="KW-0411">Iron-sulfur</keyword>
<keyword id="KW-0479">Metal-binding</keyword>
<keyword id="KW-0500">Molybdenum</keyword>
<keyword id="KW-0534">Nitrate assimilation</keyword>
<keyword id="KW-0560">Oxidoreductase</keyword>
<keyword id="KW-0574">Periplasm</keyword>
<keyword id="KW-0732">Signal</keyword>
<keyword id="KW-0813">Transport</keyword>
<organism>
    <name type="scientific">Pseudomonas aeruginosa (strain UCBPP-PA14)</name>
    <dbReference type="NCBI Taxonomy" id="208963"/>
    <lineage>
        <taxon>Bacteria</taxon>
        <taxon>Pseudomonadati</taxon>
        <taxon>Pseudomonadota</taxon>
        <taxon>Gammaproteobacteria</taxon>
        <taxon>Pseudomonadales</taxon>
        <taxon>Pseudomonadaceae</taxon>
        <taxon>Pseudomonas</taxon>
    </lineage>
</organism>
<protein>
    <recommendedName>
        <fullName evidence="1">Periplasmic nitrate reductase</fullName>
        <ecNumber evidence="1">1.9.6.1</ecNumber>
    </recommendedName>
</protein>